<keyword id="KW-0687">Ribonucleoprotein</keyword>
<keyword id="KW-0689">Ribosomal protein</keyword>
<reference key="1">
    <citation type="journal article" date="2008" name="Antimicrob. Agents Chemother.">
        <title>Whole-genome pyrosequencing of an epidemic multidrug-resistant Acinetobacter baumannii strain belonging to the European clone II group.</title>
        <authorList>
            <person name="Iacono M."/>
            <person name="Villa L."/>
            <person name="Fortini D."/>
            <person name="Bordoni R."/>
            <person name="Imperi F."/>
            <person name="Bonnal R.J."/>
            <person name="Sicheritz-Ponten T."/>
            <person name="De Bellis G."/>
            <person name="Visca P."/>
            <person name="Cassone A."/>
            <person name="Carattoli A."/>
        </authorList>
    </citation>
    <scope>NUCLEOTIDE SEQUENCE [LARGE SCALE GENOMIC DNA]</scope>
    <source>
        <strain>ACICU</strain>
    </source>
</reference>
<accession>B2HZA0</accession>
<feature type="chain" id="PRO_1000121718" description="Large ribosomal subunit protein uL29">
    <location>
        <begin position="1"/>
        <end position="65"/>
    </location>
</feature>
<proteinExistence type="inferred from homology"/>
<name>RL29_ACIBC</name>
<evidence type="ECO:0000255" key="1">
    <source>
        <dbReference type="HAMAP-Rule" id="MF_00374"/>
    </source>
</evidence>
<evidence type="ECO:0000305" key="2"/>
<sequence length="65" mass="7435">MKTKDLREKSVEELKALLDEQQLNQFRLRMAKATGQLGKSHEVQVARKTIARIKTLLTEKQGNGQ</sequence>
<dbReference type="EMBL" id="CP000863">
    <property type="protein sequence ID" value="ACC58582.1"/>
    <property type="molecule type" value="Genomic_DNA"/>
</dbReference>
<dbReference type="RefSeq" id="WP_000849928.1">
    <property type="nucleotide sequence ID" value="NZ_CP031380.1"/>
</dbReference>
<dbReference type="SMR" id="B2HZA0"/>
<dbReference type="GeneID" id="9380824"/>
<dbReference type="KEGG" id="abc:ACICU_03271"/>
<dbReference type="HOGENOM" id="CLU_158491_1_2_6"/>
<dbReference type="Proteomes" id="UP000008839">
    <property type="component" value="Chromosome"/>
</dbReference>
<dbReference type="GO" id="GO:0022625">
    <property type="term" value="C:cytosolic large ribosomal subunit"/>
    <property type="evidence" value="ECO:0007669"/>
    <property type="project" value="TreeGrafter"/>
</dbReference>
<dbReference type="GO" id="GO:0003735">
    <property type="term" value="F:structural constituent of ribosome"/>
    <property type="evidence" value="ECO:0007669"/>
    <property type="project" value="InterPro"/>
</dbReference>
<dbReference type="GO" id="GO:0006412">
    <property type="term" value="P:translation"/>
    <property type="evidence" value="ECO:0007669"/>
    <property type="project" value="UniProtKB-UniRule"/>
</dbReference>
<dbReference type="CDD" id="cd00427">
    <property type="entry name" value="Ribosomal_L29_HIP"/>
    <property type="match status" value="1"/>
</dbReference>
<dbReference type="FunFam" id="1.10.287.310:FF:000001">
    <property type="entry name" value="50S ribosomal protein L29"/>
    <property type="match status" value="1"/>
</dbReference>
<dbReference type="Gene3D" id="1.10.287.310">
    <property type="match status" value="1"/>
</dbReference>
<dbReference type="HAMAP" id="MF_00374">
    <property type="entry name" value="Ribosomal_uL29"/>
    <property type="match status" value="1"/>
</dbReference>
<dbReference type="InterPro" id="IPR050063">
    <property type="entry name" value="Ribosomal_protein_uL29"/>
</dbReference>
<dbReference type="InterPro" id="IPR001854">
    <property type="entry name" value="Ribosomal_uL29"/>
</dbReference>
<dbReference type="InterPro" id="IPR036049">
    <property type="entry name" value="Ribosomal_uL29_sf"/>
</dbReference>
<dbReference type="NCBIfam" id="TIGR00012">
    <property type="entry name" value="L29"/>
    <property type="match status" value="1"/>
</dbReference>
<dbReference type="PANTHER" id="PTHR10916">
    <property type="entry name" value="60S RIBOSOMAL PROTEIN L35/50S RIBOSOMAL PROTEIN L29"/>
    <property type="match status" value="1"/>
</dbReference>
<dbReference type="PANTHER" id="PTHR10916:SF0">
    <property type="entry name" value="LARGE RIBOSOMAL SUBUNIT PROTEIN UL29C"/>
    <property type="match status" value="1"/>
</dbReference>
<dbReference type="Pfam" id="PF00831">
    <property type="entry name" value="Ribosomal_L29"/>
    <property type="match status" value="1"/>
</dbReference>
<dbReference type="SUPFAM" id="SSF46561">
    <property type="entry name" value="Ribosomal protein L29 (L29p)"/>
    <property type="match status" value="1"/>
</dbReference>
<organism>
    <name type="scientific">Acinetobacter baumannii (strain ACICU)</name>
    <dbReference type="NCBI Taxonomy" id="405416"/>
    <lineage>
        <taxon>Bacteria</taxon>
        <taxon>Pseudomonadati</taxon>
        <taxon>Pseudomonadota</taxon>
        <taxon>Gammaproteobacteria</taxon>
        <taxon>Moraxellales</taxon>
        <taxon>Moraxellaceae</taxon>
        <taxon>Acinetobacter</taxon>
        <taxon>Acinetobacter calcoaceticus/baumannii complex</taxon>
    </lineage>
</organism>
<gene>
    <name evidence="1" type="primary">rpmC</name>
    <name type="ordered locus">ACICU_03271</name>
</gene>
<comment type="similarity">
    <text evidence="1">Belongs to the universal ribosomal protein uL29 family.</text>
</comment>
<protein>
    <recommendedName>
        <fullName evidence="1">Large ribosomal subunit protein uL29</fullName>
    </recommendedName>
    <alternativeName>
        <fullName evidence="2">50S ribosomal protein L29</fullName>
    </alternativeName>
</protein>